<accession>Q94A02</accession>
<accession>Q9SB62</accession>
<keyword id="KW-0032">Aminotransferase</keyword>
<keyword id="KW-0073">Auxin biosynthesis</keyword>
<keyword id="KW-0472">Membrane</keyword>
<keyword id="KW-0663">Pyridoxal phosphate</keyword>
<keyword id="KW-1185">Reference proteome</keyword>
<keyword id="KW-0808">Transferase</keyword>
<keyword id="KW-0812">Transmembrane</keyword>
<keyword id="KW-1133">Transmembrane helix</keyword>
<dbReference type="EC" id="2.6.1.27"/>
<dbReference type="EC" id="2.6.1.99"/>
<dbReference type="EMBL" id="AL035356">
    <property type="protein sequence ID" value="CAA22996.1"/>
    <property type="status" value="ALT_SEQ"/>
    <property type="molecule type" value="Genomic_DNA"/>
</dbReference>
<dbReference type="EMBL" id="AL161561">
    <property type="protein sequence ID" value="CAB79377.1"/>
    <property type="status" value="ALT_SEQ"/>
    <property type="molecule type" value="Genomic_DNA"/>
</dbReference>
<dbReference type="EMBL" id="CP002687">
    <property type="protein sequence ID" value="AEE84940.1"/>
    <property type="molecule type" value="Genomic_DNA"/>
</dbReference>
<dbReference type="EMBL" id="CP002687">
    <property type="protein sequence ID" value="AEE84941.1"/>
    <property type="molecule type" value="Genomic_DNA"/>
</dbReference>
<dbReference type="EMBL" id="AY050779">
    <property type="protein sequence ID" value="AAK92714.1"/>
    <property type="molecule type" value="mRNA"/>
</dbReference>
<dbReference type="EMBL" id="AY091455">
    <property type="protein sequence ID" value="AAM14394.1"/>
    <property type="molecule type" value="mRNA"/>
</dbReference>
<dbReference type="PIR" id="T05567">
    <property type="entry name" value="T05567"/>
</dbReference>
<dbReference type="RefSeq" id="NP_567706.1">
    <property type="nucleotide sequence ID" value="NM_118600.2"/>
</dbReference>
<dbReference type="RefSeq" id="NP_974608.1">
    <property type="nucleotide sequence ID" value="NM_202879.2"/>
</dbReference>
<dbReference type="SMR" id="Q94A02"/>
<dbReference type="FunCoup" id="Q94A02">
    <property type="interactions" value="81"/>
</dbReference>
<dbReference type="STRING" id="3702.Q94A02"/>
<dbReference type="iPTMnet" id="Q94A02"/>
<dbReference type="PaxDb" id="3702-AT4G24670.2"/>
<dbReference type="ProteomicsDB" id="234258"/>
<dbReference type="EnsemblPlants" id="AT4G24670.1">
    <property type="protein sequence ID" value="AT4G24670.1"/>
    <property type="gene ID" value="AT4G24670"/>
</dbReference>
<dbReference type="EnsemblPlants" id="AT4G24670.2">
    <property type="protein sequence ID" value="AT4G24670.2"/>
    <property type="gene ID" value="AT4G24670"/>
</dbReference>
<dbReference type="GeneID" id="828569"/>
<dbReference type="Gramene" id="AT4G24670.1">
    <property type="protein sequence ID" value="AT4G24670.1"/>
    <property type="gene ID" value="AT4G24670"/>
</dbReference>
<dbReference type="Gramene" id="AT4G24670.2">
    <property type="protein sequence ID" value="AT4G24670.2"/>
    <property type="gene ID" value="AT4G24670"/>
</dbReference>
<dbReference type="KEGG" id="ath:AT4G24670"/>
<dbReference type="Araport" id="AT4G24670"/>
<dbReference type="TAIR" id="AT4G24670">
    <property type="gene designation" value="TAR2"/>
</dbReference>
<dbReference type="eggNOG" id="ENOG502QPYC">
    <property type="taxonomic scope" value="Eukaryota"/>
</dbReference>
<dbReference type="HOGENOM" id="CLU_036760_1_0_1"/>
<dbReference type="InParanoid" id="Q94A02"/>
<dbReference type="OMA" id="ASCNYNE"/>
<dbReference type="PhylomeDB" id="Q94A02"/>
<dbReference type="UniPathway" id="UPA00151"/>
<dbReference type="PRO" id="PR:Q94A02"/>
<dbReference type="Proteomes" id="UP000006548">
    <property type="component" value="Chromosome 4"/>
</dbReference>
<dbReference type="ExpressionAtlas" id="Q94A02">
    <property type="expression patterns" value="baseline and differential"/>
</dbReference>
<dbReference type="GO" id="GO:0005789">
    <property type="term" value="C:endoplasmic reticulum membrane"/>
    <property type="evidence" value="ECO:0000314"/>
    <property type="project" value="TAIR"/>
</dbReference>
<dbReference type="GO" id="GO:0016846">
    <property type="term" value="F:carbon-sulfur lyase activity"/>
    <property type="evidence" value="ECO:0007669"/>
    <property type="project" value="InterPro"/>
</dbReference>
<dbReference type="GO" id="GO:0050362">
    <property type="term" value="F:L-tryptophan:2-oxoglutarate aminotransferase activity"/>
    <property type="evidence" value="ECO:0000250"/>
    <property type="project" value="TAIR"/>
</dbReference>
<dbReference type="GO" id="GO:0080097">
    <property type="term" value="F:L-tryptophan:pyruvate aminotransferase activity"/>
    <property type="evidence" value="ECO:0000250"/>
    <property type="project" value="TAIR"/>
</dbReference>
<dbReference type="GO" id="GO:0043562">
    <property type="term" value="P:cellular response to nitrogen levels"/>
    <property type="evidence" value="ECO:0000315"/>
    <property type="project" value="TAIR"/>
</dbReference>
<dbReference type="GO" id="GO:0048825">
    <property type="term" value="P:cotyledon development"/>
    <property type="evidence" value="ECO:0000316"/>
    <property type="project" value="TAIR"/>
</dbReference>
<dbReference type="GO" id="GO:0010588">
    <property type="term" value="P:cotyledon vascular tissue pattern formation"/>
    <property type="evidence" value="ECO:0000316"/>
    <property type="project" value="TAIR"/>
</dbReference>
<dbReference type="GO" id="GO:0042742">
    <property type="term" value="P:defense response to bacterium"/>
    <property type="evidence" value="ECO:0000316"/>
    <property type="project" value="TAIR"/>
</dbReference>
<dbReference type="GO" id="GO:0009793">
    <property type="term" value="P:embryo development ending in seed dormancy"/>
    <property type="evidence" value="ECO:0000316"/>
    <property type="project" value="TAIR"/>
</dbReference>
<dbReference type="GO" id="GO:0009908">
    <property type="term" value="P:flower development"/>
    <property type="evidence" value="ECO:0000316"/>
    <property type="project" value="TAIR"/>
</dbReference>
<dbReference type="GO" id="GO:0048467">
    <property type="term" value="P:gynoecium development"/>
    <property type="evidence" value="ECO:0000316"/>
    <property type="project" value="TAIR"/>
</dbReference>
<dbReference type="GO" id="GO:0009684">
    <property type="term" value="P:indoleacetic acid biosynthetic process"/>
    <property type="evidence" value="ECO:0000316"/>
    <property type="project" value="TAIR"/>
</dbReference>
<dbReference type="GO" id="GO:0048527">
    <property type="term" value="P:lateral root development"/>
    <property type="evidence" value="ECO:0000315"/>
    <property type="project" value="TAIR"/>
</dbReference>
<dbReference type="GO" id="GO:0010078">
    <property type="term" value="P:maintenance of root meristem identity"/>
    <property type="evidence" value="ECO:0000316"/>
    <property type="project" value="TAIR"/>
</dbReference>
<dbReference type="GO" id="GO:0010087">
    <property type="term" value="P:phloem or xylem histogenesis"/>
    <property type="evidence" value="ECO:0000316"/>
    <property type="project" value="TAIR"/>
</dbReference>
<dbReference type="GO" id="GO:0009958">
    <property type="term" value="P:positive gravitropism"/>
    <property type="evidence" value="ECO:0000316"/>
    <property type="project" value="TAIR"/>
</dbReference>
<dbReference type="GO" id="GO:0080022">
    <property type="term" value="P:primary root development"/>
    <property type="evidence" value="ECO:0000316"/>
    <property type="project" value="TAIR"/>
</dbReference>
<dbReference type="GO" id="GO:0009723">
    <property type="term" value="P:response to ethylene"/>
    <property type="evidence" value="ECO:0000316"/>
    <property type="project" value="TAIR"/>
</dbReference>
<dbReference type="GO" id="GO:0048367">
    <property type="term" value="P:shoot system development"/>
    <property type="evidence" value="ECO:0000316"/>
    <property type="project" value="TAIR"/>
</dbReference>
<dbReference type="CDD" id="cd00609">
    <property type="entry name" value="AAT_like"/>
    <property type="match status" value="1"/>
</dbReference>
<dbReference type="Gene3D" id="3.90.1150.10">
    <property type="entry name" value="Aspartate Aminotransferase, domain 1"/>
    <property type="match status" value="1"/>
</dbReference>
<dbReference type="Gene3D" id="2.10.25.30">
    <property type="entry name" value="EGF-like, alliinase"/>
    <property type="match status" value="1"/>
</dbReference>
<dbReference type="Gene3D" id="3.40.640.10">
    <property type="entry name" value="Type I PLP-dependent aspartate aminotransferase-like (Major domain)"/>
    <property type="match status" value="1"/>
</dbReference>
<dbReference type="InterPro" id="IPR006948">
    <property type="entry name" value="Alliinase_C"/>
</dbReference>
<dbReference type="InterPro" id="IPR037029">
    <property type="entry name" value="Alliinase_N_sf"/>
</dbReference>
<dbReference type="InterPro" id="IPR050478">
    <property type="entry name" value="Ethylene_sulfur-biosynth"/>
</dbReference>
<dbReference type="InterPro" id="IPR015424">
    <property type="entry name" value="PyrdxlP-dep_Trfase"/>
</dbReference>
<dbReference type="InterPro" id="IPR015421">
    <property type="entry name" value="PyrdxlP-dep_Trfase_major"/>
</dbReference>
<dbReference type="InterPro" id="IPR015422">
    <property type="entry name" value="PyrdxlP-dep_Trfase_small"/>
</dbReference>
<dbReference type="PANTHER" id="PTHR43795">
    <property type="entry name" value="BIFUNCTIONAL ASPARTATE AMINOTRANSFERASE AND GLUTAMATE/ASPARTATE-PREPHENATE AMINOTRANSFERASE-RELATED"/>
    <property type="match status" value="1"/>
</dbReference>
<dbReference type="PANTHER" id="PTHR43795:SF22">
    <property type="entry name" value="TRYPTOPHAN AMINOTRANSFERASE-RELATED PROTEIN 2"/>
    <property type="match status" value="1"/>
</dbReference>
<dbReference type="Pfam" id="PF04864">
    <property type="entry name" value="Alliinase_C"/>
    <property type="match status" value="1"/>
</dbReference>
<dbReference type="SUPFAM" id="SSF53383">
    <property type="entry name" value="PLP-dependent transferases"/>
    <property type="match status" value="1"/>
</dbReference>
<feature type="chain" id="PRO_0000411675" description="Tryptophan aminotransferase-related protein 2">
    <location>
        <begin position="1"/>
        <end position="440"/>
    </location>
</feature>
<feature type="transmembrane region" description="Helical" evidence="2">
    <location>
        <begin position="7"/>
        <end position="26"/>
    </location>
</feature>
<feature type="binding site" evidence="1">
    <location>
        <position position="112"/>
    </location>
    <ligand>
        <name>pyridoxal 5'-phosphate</name>
        <dbReference type="ChEBI" id="CHEBI:597326"/>
    </ligand>
</feature>
<feature type="binding site" evidence="1">
    <location>
        <begin position="154"/>
        <end position="155"/>
    </location>
    <ligand>
        <name>pyridoxal 5'-phosphate</name>
        <dbReference type="ChEBI" id="CHEBI:597326"/>
    </ligand>
</feature>
<feature type="binding site" evidence="1">
    <location>
        <position position="222"/>
    </location>
    <ligand>
        <name>pyridoxal 5'-phosphate</name>
        <dbReference type="ChEBI" id="CHEBI:597326"/>
    </ligand>
</feature>
<feature type="binding site" evidence="1">
    <location>
        <begin position="242"/>
        <end position="245"/>
    </location>
    <ligand>
        <name>pyridoxal 5'-phosphate</name>
        <dbReference type="ChEBI" id="CHEBI:597326"/>
    </ligand>
</feature>
<feature type="binding site" evidence="1">
    <location>
        <begin position="265"/>
        <end position="268"/>
    </location>
    <ligand>
        <name>pyridoxal 5'-phosphate</name>
        <dbReference type="ChEBI" id="CHEBI:597326"/>
    </ligand>
</feature>
<feature type="binding site" evidence="1">
    <location>
        <position position="276"/>
    </location>
    <ligand>
        <name>pyridoxal 5'-phosphate</name>
        <dbReference type="ChEBI" id="CHEBI:597326"/>
    </ligand>
</feature>
<feature type="modified residue" description="N6-(pyridoxal phosphate)lysine" evidence="2">
    <location>
        <position position="268"/>
    </location>
</feature>
<reference key="1">
    <citation type="journal article" date="1999" name="Nature">
        <title>Sequence and analysis of chromosome 4 of the plant Arabidopsis thaliana.</title>
        <authorList>
            <person name="Mayer K.F.X."/>
            <person name="Schueller C."/>
            <person name="Wambutt R."/>
            <person name="Murphy G."/>
            <person name="Volckaert G."/>
            <person name="Pohl T."/>
            <person name="Duesterhoeft A."/>
            <person name="Stiekema W."/>
            <person name="Entian K.-D."/>
            <person name="Terryn N."/>
            <person name="Harris B."/>
            <person name="Ansorge W."/>
            <person name="Brandt P."/>
            <person name="Grivell L.A."/>
            <person name="Rieger M."/>
            <person name="Weichselgartner M."/>
            <person name="de Simone V."/>
            <person name="Obermaier B."/>
            <person name="Mache R."/>
            <person name="Mueller M."/>
            <person name="Kreis M."/>
            <person name="Delseny M."/>
            <person name="Puigdomenech P."/>
            <person name="Watson M."/>
            <person name="Schmidtheini T."/>
            <person name="Reichert B."/>
            <person name="Portetelle D."/>
            <person name="Perez-Alonso M."/>
            <person name="Boutry M."/>
            <person name="Bancroft I."/>
            <person name="Vos P."/>
            <person name="Hoheisel J."/>
            <person name="Zimmermann W."/>
            <person name="Wedler H."/>
            <person name="Ridley P."/>
            <person name="Langham S.-A."/>
            <person name="McCullagh B."/>
            <person name="Bilham L."/>
            <person name="Robben J."/>
            <person name="van der Schueren J."/>
            <person name="Grymonprez B."/>
            <person name="Chuang Y.-J."/>
            <person name="Vandenbussche F."/>
            <person name="Braeken M."/>
            <person name="Weltjens I."/>
            <person name="Voet M."/>
            <person name="Bastiaens I."/>
            <person name="Aert R."/>
            <person name="Defoor E."/>
            <person name="Weitzenegger T."/>
            <person name="Bothe G."/>
            <person name="Ramsperger U."/>
            <person name="Hilbert H."/>
            <person name="Braun M."/>
            <person name="Holzer E."/>
            <person name="Brandt A."/>
            <person name="Peters S."/>
            <person name="van Staveren M."/>
            <person name="Dirkse W."/>
            <person name="Mooijman P."/>
            <person name="Klein Lankhorst R."/>
            <person name="Rose M."/>
            <person name="Hauf J."/>
            <person name="Koetter P."/>
            <person name="Berneiser S."/>
            <person name="Hempel S."/>
            <person name="Feldpausch M."/>
            <person name="Lamberth S."/>
            <person name="Van den Daele H."/>
            <person name="De Keyser A."/>
            <person name="Buysshaert C."/>
            <person name="Gielen J."/>
            <person name="Villarroel R."/>
            <person name="De Clercq R."/>
            <person name="van Montagu M."/>
            <person name="Rogers J."/>
            <person name="Cronin A."/>
            <person name="Quail M.A."/>
            <person name="Bray-Allen S."/>
            <person name="Clark L."/>
            <person name="Doggett J."/>
            <person name="Hall S."/>
            <person name="Kay M."/>
            <person name="Lennard N."/>
            <person name="McLay K."/>
            <person name="Mayes R."/>
            <person name="Pettett A."/>
            <person name="Rajandream M.A."/>
            <person name="Lyne M."/>
            <person name="Benes V."/>
            <person name="Rechmann S."/>
            <person name="Borkova D."/>
            <person name="Bloecker H."/>
            <person name="Scharfe M."/>
            <person name="Grimm M."/>
            <person name="Loehnert T.-H."/>
            <person name="Dose S."/>
            <person name="de Haan M."/>
            <person name="Maarse A.C."/>
            <person name="Schaefer M."/>
            <person name="Mueller-Auer S."/>
            <person name="Gabel C."/>
            <person name="Fuchs M."/>
            <person name="Fartmann B."/>
            <person name="Granderath K."/>
            <person name="Dauner D."/>
            <person name="Herzl A."/>
            <person name="Neumann S."/>
            <person name="Argiriou A."/>
            <person name="Vitale D."/>
            <person name="Liguori R."/>
            <person name="Piravandi E."/>
            <person name="Massenet O."/>
            <person name="Quigley F."/>
            <person name="Clabauld G."/>
            <person name="Muendlein A."/>
            <person name="Felber R."/>
            <person name="Schnabl S."/>
            <person name="Hiller R."/>
            <person name="Schmidt W."/>
            <person name="Lecharny A."/>
            <person name="Aubourg S."/>
            <person name="Chefdor F."/>
            <person name="Cooke R."/>
            <person name="Berger C."/>
            <person name="Monfort A."/>
            <person name="Casacuberta E."/>
            <person name="Gibbons T."/>
            <person name="Weber N."/>
            <person name="Vandenbol M."/>
            <person name="Bargues M."/>
            <person name="Terol J."/>
            <person name="Torres A."/>
            <person name="Perez-Perez A."/>
            <person name="Purnelle B."/>
            <person name="Bent E."/>
            <person name="Johnson S."/>
            <person name="Tacon D."/>
            <person name="Jesse T."/>
            <person name="Heijnen L."/>
            <person name="Schwarz S."/>
            <person name="Scholler P."/>
            <person name="Heber S."/>
            <person name="Francs P."/>
            <person name="Bielke C."/>
            <person name="Frishman D."/>
            <person name="Haase D."/>
            <person name="Lemcke K."/>
            <person name="Mewes H.-W."/>
            <person name="Stocker S."/>
            <person name="Zaccaria P."/>
            <person name="Bevan M."/>
            <person name="Wilson R.K."/>
            <person name="de la Bastide M."/>
            <person name="Habermann K."/>
            <person name="Parnell L."/>
            <person name="Dedhia N."/>
            <person name="Gnoj L."/>
            <person name="Schutz K."/>
            <person name="Huang E."/>
            <person name="Spiegel L."/>
            <person name="Sekhon M."/>
            <person name="Murray J."/>
            <person name="Sheet P."/>
            <person name="Cordes M."/>
            <person name="Abu-Threideh J."/>
            <person name="Stoneking T."/>
            <person name="Kalicki J."/>
            <person name="Graves T."/>
            <person name="Harmon G."/>
            <person name="Edwards J."/>
            <person name="Latreille P."/>
            <person name="Courtney L."/>
            <person name="Cloud J."/>
            <person name="Abbott A."/>
            <person name="Scott K."/>
            <person name="Johnson D."/>
            <person name="Minx P."/>
            <person name="Bentley D."/>
            <person name="Fulton B."/>
            <person name="Miller N."/>
            <person name="Greco T."/>
            <person name="Kemp K."/>
            <person name="Kramer J."/>
            <person name="Fulton L."/>
            <person name="Mardis E."/>
            <person name="Dante M."/>
            <person name="Pepin K."/>
            <person name="Hillier L.W."/>
            <person name="Nelson J."/>
            <person name="Spieth J."/>
            <person name="Ryan E."/>
            <person name="Andrews S."/>
            <person name="Geisel C."/>
            <person name="Layman D."/>
            <person name="Du H."/>
            <person name="Ali J."/>
            <person name="Berghoff A."/>
            <person name="Jones K."/>
            <person name="Drone K."/>
            <person name="Cotton M."/>
            <person name="Joshu C."/>
            <person name="Antonoiu B."/>
            <person name="Zidanic M."/>
            <person name="Strong C."/>
            <person name="Sun H."/>
            <person name="Lamar B."/>
            <person name="Yordan C."/>
            <person name="Ma P."/>
            <person name="Zhong J."/>
            <person name="Preston R."/>
            <person name="Vil D."/>
            <person name="Shekher M."/>
            <person name="Matero A."/>
            <person name="Shah R."/>
            <person name="Swaby I.K."/>
            <person name="O'Shaughnessy A."/>
            <person name="Rodriguez M."/>
            <person name="Hoffman J."/>
            <person name="Till S."/>
            <person name="Granat S."/>
            <person name="Shohdy N."/>
            <person name="Hasegawa A."/>
            <person name="Hameed A."/>
            <person name="Lodhi M."/>
            <person name="Johnson A."/>
            <person name="Chen E."/>
            <person name="Marra M.A."/>
            <person name="Martienssen R."/>
            <person name="McCombie W.R."/>
        </authorList>
    </citation>
    <scope>NUCLEOTIDE SEQUENCE [LARGE SCALE GENOMIC DNA]</scope>
    <source>
        <strain>cv. Columbia</strain>
    </source>
</reference>
<reference key="2">
    <citation type="journal article" date="2017" name="Plant J.">
        <title>Araport11: a complete reannotation of the Arabidopsis thaliana reference genome.</title>
        <authorList>
            <person name="Cheng C.Y."/>
            <person name="Krishnakumar V."/>
            <person name="Chan A.P."/>
            <person name="Thibaud-Nissen F."/>
            <person name="Schobel S."/>
            <person name="Town C.D."/>
        </authorList>
    </citation>
    <scope>GENOME REANNOTATION</scope>
    <source>
        <strain>cv. Columbia</strain>
    </source>
</reference>
<reference key="3">
    <citation type="journal article" date="2003" name="Science">
        <title>Empirical analysis of transcriptional activity in the Arabidopsis genome.</title>
        <authorList>
            <person name="Yamada K."/>
            <person name="Lim J."/>
            <person name="Dale J.M."/>
            <person name="Chen H."/>
            <person name="Shinn P."/>
            <person name="Palm C.J."/>
            <person name="Southwick A.M."/>
            <person name="Wu H.C."/>
            <person name="Kim C.J."/>
            <person name="Nguyen M."/>
            <person name="Pham P.K."/>
            <person name="Cheuk R.F."/>
            <person name="Karlin-Newmann G."/>
            <person name="Liu S.X."/>
            <person name="Lam B."/>
            <person name="Sakano H."/>
            <person name="Wu T."/>
            <person name="Yu G."/>
            <person name="Miranda M."/>
            <person name="Quach H.L."/>
            <person name="Tripp M."/>
            <person name="Chang C.H."/>
            <person name="Lee J.M."/>
            <person name="Toriumi M.J."/>
            <person name="Chan M.M."/>
            <person name="Tang C.C."/>
            <person name="Onodera C.S."/>
            <person name="Deng J.M."/>
            <person name="Akiyama K."/>
            <person name="Ansari Y."/>
            <person name="Arakawa T."/>
            <person name="Banh J."/>
            <person name="Banno F."/>
            <person name="Bowser L."/>
            <person name="Brooks S.Y."/>
            <person name="Carninci P."/>
            <person name="Chao Q."/>
            <person name="Choy N."/>
            <person name="Enju A."/>
            <person name="Goldsmith A.D."/>
            <person name="Gurjal M."/>
            <person name="Hansen N.F."/>
            <person name="Hayashizaki Y."/>
            <person name="Johnson-Hopson C."/>
            <person name="Hsuan V.W."/>
            <person name="Iida K."/>
            <person name="Karnes M."/>
            <person name="Khan S."/>
            <person name="Koesema E."/>
            <person name="Ishida J."/>
            <person name="Jiang P.X."/>
            <person name="Jones T."/>
            <person name="Kawai J."/>
            <person name="Kamiya A."/>
            <person name="Meyers C."/>
            <person name="Nakajima M."/>
            <person name="Narusaka M."/>
            <person name="Seki M."/>
            <person name="Sakurai T."/>
            <person name="Satou M."/>
            <person name="Tamse R."/>
            <person name="Vaysberg M."/>
            <person name="Wallender E.K."/>
            <person name="Wong C."/>
            <person name="Yamamura Y."/>
            <person name="Yuan S."/>
            <person name="Shinozaki K."/>
            <person name="Davis R.W."/>
            <person name="Theologis A."/>
            <person name="Ecker J.R."/>
        </authorList>
    </citation>
    <scope>NUCLEOTIDE SEQUENCE [LARGE SCALE MRNA]</scope>
    <source>
        <strain>cv. Columbia</strain>
    </source>
</reference>
<reference key="4">
    <citation type="journal article" date="2008" name="Cell">
        <title>TAA1-mediated auxin biosynthesis is essential for hormone crosstalk and plant development.</title>
        <authorList>
            <person name="Stepanova A.N."/>
            <person name="Robertson-Hoyt J."/>
            <person name="Yun J."/>
            <person name="Benavente L.M."/>
            <person name="Xie D.Y."/>
            <person name="Dolezal K."/>
            <person name="Schlereth A."/>
            <person name="Juergens G."/>
            <person name="Alonso J.M."/>
        </authorList>
    </citation>
    <scope>FUNCTION</scope>
    <scope>DISRUPTION PHENOTYPE</scope>
    <scope>TISSUE SPECIFICITY</scope>
    <scope>DEVELOPMENTAL STAGE</scope>
    <scope>INDUCTION BY ETHYLENE</scope>
    <scope>GENE FAMILY</scope>
    <scope>NOMENCLATURE</scope>
</reference>
<reference key="5">
    <citation type="journal article" date="2008" name="Cell">
        <title>Rapid synthesis of auxin via a new tryptophan-dependent pathway is required for shade avoidance in plants.</title>
        <authorList>
            <person name="Tao Y."/>
            <person name="Ferrer J.L."/>
            <person name="Ljung K."/>
            <person name="Pojer F."/>
            <person name="Hong F."/>
            <person name="Long J.A."/>
            <person name="Li L."/>
            <person name="Moreno J.E."/>
            <person name="Bowman M.E."/>
            <person name="Ivans L.J."/>
            <person name="Cheng Y."/>
            <person name="Lim J."/>
            <person name="Zhao Y."/>
            <person name="Ballare C.L."/>
            <person name="Sandberg G."/>
            <person name="Noel J.P."/>
            <person name="Chory J."/>
        </authorList>
    </citation>
    <scope>GENE FAMILY</scope>
    <scope>NOMENCLATURE</scope>
</reference>
<reference key="6">
    <citation type="journal article" date="2011" name="Plant Cell">
        <title>A small-molecule screen identifies L-kynurenine as a competitive inhibitor of TAA1/TAR activity in ethylene-directed auxin biosynthesis and root growth in Arabidopsis.</title>
        <authorList>
            <person name="He W."/>
            <person name="Brumos J."/>
            <person name="Li H."/>
            <person name="Ji Y."/>
            <person name="Ke M."/>
            <person name="Gong X."/>
            <person name="Zeng Q."/>
            <person name="Li W."/>
            <person name="Zhang X."/>
            <person name="An F."/>
            <person name="Wen X."/>
            <person name="Li P."/>
            <person name="Chu J."/>
            <person name="Sun X."/>
            <person name="Yan C."/>
            <person name="Yan N."/>
            <person name="Xie D.Y."/>
            <person name="Raikhel N."/>
            <person name="Yang Z."/>
            <person name="Stepanova A.N."/>
            <person name="Alonso J.M."/>
            <person name="Guo H."/>
        </authorList>
    </citation>
    <scope>ACTIVITY REGULATION</scope>
</reference>
<comment type="function">
    <text evidence="3">Involved in auxin production. Both TAA1 and TAR2 are required for maintaining proper auxin levels in roots, while TAA1, TAR1 and TAR2 are required for proper embryo patterning. Involved in the maintenance of the root stem cell niches.</text>
</comment>
<comment type="catalytic activity">
    <reaction>
        <text>L-tryptophan + 2-oxoglutarate = indole-3-pyruvate + L-glutamate</text>
        <dbReference type="Rhea" id="RHEA:14093"/>
        <dbReference type="ChEBI" id="CHEBI:16810"/>
        <dbReference type="ChEBI" id="CHEBI:17640"/>
        <dbReference type="ChEBI" id="CHEBI:29985"/>
        <dbReference type="ChEBI" id="CHEBI:57912"/>
        <dbReference type="EC" id="2.6.1.27"/>
    </reaction>
</comment>
<comment type="catalytic activity">
    <reaction>
        <text>L-tryptophan + pyruvate = indole-3-pyruvate + L-alanine</text>
        <dbReference type="Rhea" id="RHEA:27586"/>
        <dbReference type="ChEBI" id="CHEBI:15361"/>
        <dbReference type="ChEBI" id="CHEBI:17640"/>
        <dbReference type="ChEBI" id="CHEBI:57912"/>
        <dbReference type="ChEBI" id="CHEBI:57972"/>
        <dbReference type="EC" id="2.6.1.99"/>
    </reaction>
</comment>
<comment type="cofactor">
    <cofactor evidence="1">
        <name>pyridoxal 5'-phosphate</name>
        <dbReference type="ChEBI" id="CHEBI:597326"/>
    </cofactor>
</comment>
<comment type="activity regulation">
    <text evidence="4">Inhibited by L-kynurenine.</text>
</comment>
<comment type="pathway">
    <text>Plant hormone metabolism; auxin biosynthesis.</text>
</comment>
<comment type="subcellular location">
    <subcellularLocation>
        <location evidence="5">Membrane</location>
        <topology evidence="5">Single-pass membrane protein</topology>
    </subcellularLocation>
</comment>
<comment type="tissue specificity">
    <text evidence="3">Expressed in roots, cotyledons and in the apical parts of hypocotyls. In roots, restricted to the provasculature of meristematic regions. Detected on the inner side of the apical hooks.</text>
</comment>
<comment type="developmental stage">
    <text evidence="3">In early-stage flowers, expressed in all floral organs. Becomes later restricted to the gynoecia, preferentially to the outer cell layers that give rise to the valves. No expression in flowers at anthesis.</text>
</comment>
<comment type="induction">
    <text evidence="3">Up-regulated by ethylene.</text>
</comment>
<comment type="disruption phenotype">
    <text evidence="3">No visible phenotype.</text>
</comment>
<comment type="similarity">
    <text evidence="5">Belongs to the alliinase family.</text>
</comment>
<comment type="sequence caution" evidence="5">
    <conflict type="erroneous gene model prediction">
        <sequence resource="EMBL-CDS" id="CAA22996"/>
    </conflict>
</comment>
<comment type="sequence caution" evidence="5">
    <conflict type="erroneous gene model prediction">
        <sequence resource="EMBL-CDS" id="CAB79377"/>
    </conflict>
</comment>
<gene>
    <name type="primary">TAR2</name>
    <name type="ordered locus">At4g24670</name>
    <name type="ORF">F22K18.130</name>
</gene>
<name>TAR2_ARATH</name>
<organism>
    <name type="scientific">Arabidopsis thaliana</name>
    <name type="common">Mouse-ear cress</name>
    <dbReference type="NCBI Taxonomy" id="3702"/>
    <lineage>
        <taxon>Eukaryota</taxon>
        <taxon>Viridiplantae</taxon>
        <taxon>Streptophyta</taxon>
        <taxon>Embryophyta</taxon>
        <taxon>Tracheophyta</taxon>
        <taxon>Spermatophyta</taxon>
        <taxon>Magnoliopsida</taxon>
        <taxon>eudicotyledons</taxon>
        <taxon>Gunneridae</taxon>
        <taxon>Pentapetalae</taxon>
        <taxon>rosids</taxon>
        <taxon>malvids</taxon>
        <taxon>Brassicales</taxon>
        <taxon>Brassicaceae</taxon>
        <taxon>Camelineae</taxon>
        <taxon>Arabidopsis</taxon>
    </lineage>
</organism>
<evidence type="ECO:0000250" key="1">
    <source>
        <dbReference type="UniProtKB" id="Q9S7N2"/>
    </source>
</evidence>
<evidence type="ECO:0000255" key="2"/>
<evidence type="ECO:0000269" key="3">
    <source>
    </source>
</evidence>
<evidence type="ECO:0000269" key="4">
    <source>
    </source>
</evidence>
<evidence type="ECO:0000305" key="5"/>
<protein>
    <recommendedName>
        <fullName>Tryptophan aminotransferase-related protein 2</fullName>
        <ecNumber>2.6.1.27</ecNumber>
        <ecNumber>2.6.1.99</ecNumber>
    </recommendedName>
</protein>
<proteinExistence type="evidence at transcript level"/>
<sequence length="440" mass="50007">MGQIPRFLSWRNMLVLSLAINFSLILKILKGDRERGDSWDRTAYVSIWPVVSTTASESSSLSSASCNYSKIEEDDDRIINLKFGDPTVYERYWQENGEVTTMVIPGWQSLSYFSDENNLCWFLEPELAKEIVRVHKVVGNAVTQDRFIVVGTGSTQLYQAALYALSPHDDSGPINVVSATPYYSTYPLITDCLKSGLYRWGGDAKTYKEDGPYIELVTSPNNPDGFLRESVVNSTEGILIHDLAYYWPQYTPITSPADHDVMLFTASKSTGHAGIRIGWALVKDRETARKMIEYIELNTIGVSKDSQLRVAKVLKVVSDSCGNVTGKSFFDHSYDAMYERWKLLKQAAKDTKRFSVPDFVSQRCNFFGRVFEPQPAFAWFKCEEGIVDCEKFLREEKKILTKSGKYFGDELSNVRISMLDRDTNFNIFLHRITSSFNSTL</sequence>